<name>NDB4G_UROYA</name>
<organism>
    <name type="scientific">Urodacus yaschenkoi</name>
    <name type="common">Inland robust scorpion</name>
    <dbReference type="NCBI Taxonomy" id="1273102"/>
    <lineage>
        <taxon>Eukaryota</taxon>
        <taxon>Metazoa</taxon>
        <taxon>Ecdysozoa</taxon>
        <taxon>Arthropoda</taxon>
        <taxon>Chelicerata</taxon>
        <taxon>Arachnida</taxon>
        <taxon>Scorpiones</taxon>
        <taxon>Iurida</taxon>
        <taxon>Scorpionoidea</taxon>
        <taxon>Scorpionidae</taxon>
        <taxon>Urodacinae</taxon>
        <taxon>Urodacus</taxon>
    </lineage>
</organism>
<proteinExistence type="evidence at transcript level"/>
<protein>
    <recommendedName>
        <fullName evidence="4">Antimicrobial peptide UyCT1</fullName>
        <shortName evidence="4">CT1</shortName>
    </recommendedName>
    <alternativeName>
        <fullName evidence="6">Non-disulfide-bridged peptide 4.16</fullName>
        <shortName evidence="6">NDBP-4.16</shortName>
    </alternativeName>
    <alternativeName>
        <fullName evidence="5">Non-disulfide-bridged peptide 5.18</fullName>
        <shortName evidence="5">NDBP-5.18</shortName>
    </alternativeName>
    <component>
        <recommendedName>
            <fullName>Antimicrobial peptide UyCT2</fullName>
        </recommendedName>
        <alternativeName>
            <fullName evidence="5">Non-disulfide-bridged peptide 5.19</fullName>
            <shortName evidence="5">NDBP-5.19</shortName>
        </alternativeName>
    </component>
</protein>
<feature type="signal peptide" evidence="2">
    <location>
        <begin position="1"/>
        <end position="23"/>
    </location>
</feature>
<feature type="peptide" id="PRO_5001091946" description="Antimicrobial peptide UyCT1">
    <location>
        <begin position="24"/>
        <end position="37"/>
    </location>
</feature>
<feature type="peptide" id="PRO_5001091945" description="Antimicrobial peptide UyCT2">
    <location>
        <begin position="25"/>
        <end position="37"/>
    </location>
</feature>
<feature type="propeptide" id="PRO_0000430183" evidence="1">
    <location>
        <begin position="41"/>
        <end position="79"/>
    </location>
</feature>
<feature type="modified residue" description="Isoleucine amide" evidence="1">
    <location>
        <position position="37"/>
    </location>
</feature>
<reference key="1">
    <citation type="journal article" date="2013" name="Toxicon">
        <title>Characterization of the venom from the Australian scorpion Urodacus yaschenkoi: molecular mass analysis of components, cDNA sequences and peptides with antimicrobial activity.</title>
        <authorList>
            <person name="Luna-Ramirez K."/>
            <person name="Quintero-Hernandez V."/>
            <person name="Vargas-Jaimes L."/>
            <person name="Batista C.V."/>
            <person name="Winkel K.D."/>
            <person name="Possani L.D."/>
        </authorList>
    </citation>
    <scope>NUCLEOTIDE SEQUENCE [MRNA]</scope>
    <scope>SYNTHESIS OF 24-37 (CT1)</scope>
    <scope>SYNTHESIS OF 25-37 (CT2)</scope>
    <scope>FUNCTION</scope>
    <source>
        <tissue>Venom gland</tissue>
    </source>
</reference>
<reference key="2">
    <citation type="journal article" date="2013" name="Peptides">
        <title>Three new antimicrobial peptides from the scorpion Pandinus imperator.</title>
        <authorList>
            <person name="Zeng X.C."/>
            <person name="Zhou L."/>
            <person name="Shi W."/>
            <person name="Luo X."/>
            <person name="Zhang L."/>
            <person name="Nie Y."/>
            <person name="Wang J."/>
            <person name="Wu S."/>
            <person name="Cao B."/>
            <person name="Cao H."/>
        </authorList>
    </citation>
    <scope>NOMENCLATURE</scope>
</reference>
<reference key="3">
    <citation type="journal article" date="2014" name="Peptides">
        <title>Scorpion venom peptides with no disulfide bridges: a review.</title>
        <authorList>
            <person name="Almaaytah A."/>
            <person name="Albalas Q."/>
        </authorList>
    </citation>
    <scope>NOMENCLATURE</scope>
</reference>
<comment type="function">
    <molecule>Antimicrobial peptide UyCT1</molecule>
    <text evidence="3">Inhibits the growth of Gram-positive (S.aureus, MIC=15 uM) and Gram-negative bacteria (E.coli, MIC=10 uM and P.aeruginosa, MIC=10 uM). It also shows 26% of hemolysis when 15 uM are tested (81% at 50 uM) (PubMed:23182832).</text>
</comment>
<comment type="function">
    <molecule>Antimicrobial peptide UyCT2</molecule>
    <text evidence="3">Inhibits the growth of Gram-negative bacteria (E.coli, MIC=25 uM and P.aeruginosa, MIC=40 uM). It also shows 7% of hemolysis when 50 uM are tested. Does not show activity against the Gram-positive bacteria S.aureus (PubMed:23182832).</text>
</comment>
<comment type="subcellular location">
    <subcellularLocation>
        <location evidence="1">Secreted</location>
    </subcellularLocation>
    <subcellularLocation>
        <location evidence="1">Target cell membrane</location>
    </subcellularLocation>
    <text evidence="1">Forms a helical membrane channel in the prey.</text>
</comment>
<comment type="tissue specificity">
    <text>Expressed by the venom gland.</text>
</comment>
<comment type="similarity">
    <text evidence="7">Belongs to the non-disulfide-bridged peptide (NDBP) superfamily. Short antimicrobial peptide (group 4) family.</text>
</comment>
<sequence length="79" mass="8765">MKTQLAFLAITVILMQLFAQTEAGFWGKLWEGVKNAIGKRGLRNVDQIADLFDSGLSDADDLFDSGLSDADAKFMKMFM</sequence>
<dbReference type="EMBL" id="JX274240">
    <property type="protein sequence ID" value="AGA82754.1"/>
    <property type="molecule type" value="mRNA"/>
</dbReference>
<dbReference type="GO" id="GO:0005576">
    <property type="term" value="C:extracellular region"/>
    <property type="evidence" value="ECO:0007669"/>
    <property type="project" value="UniProtKB-SubCell"/>
</dbReference>
<dbReference type="GO" id="GO:0016020">
    <property type="term" value="C:membrane"/>
    <property type="evidence" value="ECO:0007669"/>
    <property type="project" value="UniProtKB-KW"/>
</dbReference>
<dbReference type="GO" id="GO:0044218">
    <property type="term" value="C:other organism cell membrane"/>
    <property type="evidence" value="ECO:0007669"/>
    <property type="project" value="UniProtKB-KW"/>
</dbReference>
<dbReference type="GO" id="GO:0042742">
    <property type="term" value="P:defense response to bacterium"/>
    <property type="evidence" value="ECO:0007669"/>
    <property type="project" value="UniProtKB-KW"/>
</dbReference>
<dbReference type="GO" id="GO:0031640">
    <property type="term" value="P:killing of cells of another organism"/>
    <property type="evidence" value="ECO:0007669"/>
    <property type="project" value="UniProtKB-KW"/>
</dbReference>
<evidence type="ECO:0000250" key="1"/>
<evidence type="ECO:0000255" key="2"/>
<evidence type="ECO:0000269" key="3">
    <source>
    </source>
</evidence>
<evidence type="ECO:0000303" key="4">
    <source>
    </source>
</evidence>
<evidence type="ECO:0000303" key="5">
    <source>
    </source>
</evidence>
<evidence type="ECO:0000303" key="6">
    <source>
    </source>
</evidence>
<evidence type="ECO:0000305" key="7"/>
<accession>L0GCV8</accession>
<keyword id="KW-0027">Amidation</keyword>
<keyword id="KW-0044">Antibiotic</keyword>
<keyword id="KW-0929">Antimicrobial</keyword>
<keyword id="KW-0165">Cleavage on pair of basic residues</keyword>
<keyword id="KW-0204">Cytolysis</keyword>
<keyword id="KW-0354">Hemolysis</keyword>
<keyword id="KW-0472">Membrane</keyword>
<keyword id="KW-0964">Secreted</keyword>
<keyword id="KW-0732">Signal</keyword>
<keyword id="KW-1052">Target cell membrane</keyword>
<keyword id="KW-1053">Target membrane</keyword>
<keyword id="KW-0812">Transmembrane</keyword>